<feature type="chain" id="PRO_0000140017" description="Ribonuclease P protein component 2">
    <location>
        <begin position="1"/>
        <end position="109"/>
    </location>
</feature>
<keyword id="KW-0963">Cytoplasm</keyword>
<keyword id="KW-0255">Endonuclease</keyword>
<keyword id="KW-0378">Hydrolase</keyword>
<keyword id="KW-0540">Nuclease</keyword>
<keyword id="KW-1185">Reference proteome</keyword>
<keyword id="KW-0819">tRNA processing</keyword>
<organism>
    <name type="scientific">Archaeoglobus fulgidus (strain ATCC 49558 / DSM 4304 / JCM 9628 / NBRC 100126 / VC-16)</name>
    <dbReference type="NCBI Taxonomy" id="224325"/>
    <lineage>
        <taxon>Archaea</taxon>
        <taxon>Methanobacteriati</taxon>
        <taxon>Methanobacteriota</taxon>
        <taxon>Archaeoglobi</taxon>
        <taxon>Archaeoglobales</taxon>
        <taxon>Archaeoglobaceae</taxon>
        <taxon>Archaeoglobus</taxon>
    </lineage>
</organism>
<sequence>MKGLPPSLRSRKRYIAFRIIAEKKIDERSLSRALSEKMLSLFGECFAASGLRLEAFDGERGIVRCYREALDKVMVALTLMTHVGGVRVIPLTLGVSGTIKRCKRKYLEV</sequence>
<name>RNP2_ARCFU</name>
<gene>
    <name evidence="1" type="primary">rnp2</name>
    <name type="ordered locus">AF_0489</name>
</gene>
<comment type="function">
    <text evidence="1">Part of ribonuclease P, a protein complex that generates mature tRNA molecules by cleaving their 5'-ends.</text>
</comment>
<comment type="catalytic activity">
    <reaction evidence="1">
        <text>Endonucleolytic cleavage of RNA, removing 5'-extranucleotides from tRNA precursor.</text>
        <dbReference type="EC" id="3.1.26.5"/>
    </reaction>
</comment>
<comment type="subunit">
    <text evidence="1">Consists of a catalytic RNA component and at least 4-5 protein subunits.</text>
</comment>
<comment type="subcellular location">
    <subcellularLocation>
        <location evidence="1">Cytoplasm</location>
    </subcellularLocation>
</comment>
<comment type="similarity">
    <text evidence="1">Belongs to the eukaryotic/archaeal RNase P protein component 2 family.</text>
</comment>
<comment type="sequence caution" evidence="2">
    <conflict type="erroneous initiation">
        <sequence resource="EMBL-CDS" id="AAB90748"/>
    </conflict>
    <text>Extended N-terminus.</text>
</comment>
<accession>O29761</accession>
<reference key="1">
    <citation type="journal article" date="1997" name="Nature">
        <title>The complete genome sequence of the hyperthermophilic, sulphate-reducing archaeon Archaeoglobus fulgidus.</title>
        <authorList>
            <person name="Klenk H.-P."/>
            <person name="Clayton R.A."/>
            <person name="Tomb J.-F."/>
            <person name="White O."/>
            <person name="Nelson K.E."/>
            <person name="Ketchum K.A."/>
            <person name="Dodson R.J."/>
            <person name="Gwinn M.L."/>
            <person name="Hickey E.K."/>
            <person name="Peterson J.D."/>
            <person name="Richardson D.L."/>
            <person name="Kerlavage A.R."/>
            <person name="Graham D.E."/>
            <person name="Kyrpides N.C."/>
            <person name="Fleischmann R.D."/>
            <person name="Quackenbush J."/>
            <person name="Lee N.H."/>
            <person name="Sutton G.G."/>
            <person name="Gill S.R."/>
            <person name="Kirkness E.F."/>
            <person name="Dougherty B.A."/>
            <person name="McKenney K."/>
            <person name="Adams M.D."/>
            <person name="Loftus B.J."/>
            <person name="Peterson S.N."/>
            <person name="Reich C.I."/>
            <person name="McNeil L.K."/>
            <person name="Badger J.H."/>
            <person name="Glodek A."/>
            <person name="Zhou L."/>
            <person name="Overbeek R."/>
            <person name="Gocayne J.D."/>
            <person name="Weidman J.F."/>
            <person name="McDonald L.A."/>
            <person name="Utterback T.R."/>
            <person name="Cotton M.D."/>
            <person name="Spriggs T."/>
            <person name="Artiach P."/>
            <person name="Kaine B.P."/>
            <person name="Sykes S.M."/>
            <person name="Sadow P.W."/>
            <person name="D'Andrea K.P."/>
            <person name="Bowman C."/>
            <person name="Fujii C."/>
            <person name="Garland S.A."/>
            <person name="Mason T.M."/>
            <person name="Olsen G.J."/>
            <person name="Fraser C.M."/>
            <person name="Smith H.O."/>
            <person name="Woese C.R."/>
            <person name="Venter J.C."/>
        </authorList>
    </citation>
    <scope>NUCLEOTIDE SEQUENCE [LARGE SCALE GENOMIC DNA]</scope>
    <source>
        <strain>ATCC 49558 / DSM 4304 / JCM 9628 / NBRC 100126 / VC-16</strain>
    </source>
</reference>
<dbReference type="EC" id="3.1.26.5" evidence="1"/>
<dbReference type="EMBL" id="AE000782">
    <property type="protein sequence ID" value="AAB90748.1"/>
    <property type="status" value="ALT_INIT"/>
    <property type="molecule type" value="Genomic_DNA"/>
</dbReference>
<dbReference type="PIR" id="A69311">
    <property type="entry name" value="A69311"/>
</dbReference>
<dbReference type="RefSeq" id="WP_048064245.1">
    <property type="nucleotide sequence ID" value="NC_000917.1"/>
</dbReference>
<dbReference type="SMR" id="O29761"/>
<dbReference type="STRING" id="224325.AF_0489"/>
<dbReference type="PaxDb" id="224325-AF_0489"/>
<dbReference type="EnsemblBacteria" id="AAB90748">
    <property type="protein sequence ID" value="AAB90748"/>
    <property type="gene ID" value="AF_0489"/>
</dbReference>
<dbReference type="KEGG" id="afu:AF_0489"/>
<dbReference type="eggNOG" id="arCOG01365">
    <property type="taxonomic scope" value="Archaea"/>
</dbReference>
<dbReference type="HOGENOM" id="CLU_137733_1_0_2"/>
<dbReference type="OrthoDB" id="19261at2157"/>
<dbReference type="PhylomeDB" id="O29761"/>
<dbReference type="Proteomes" id="UP000002199">
    <property type="component" value="Chromosome"/>
</dbReference>
<dbReference type="GO" id="GO:0005737">
    <property type="term" value="C:cytoplasm"/>
    <property type="evidence" value="ECO:0007669"/>
    <property type="project" value="UniProtKB-SubCell"/>
</dbReference>
<dbReference type="GO" id="GO:0030677">
    <property type="term" value="C:ribonuclease P complex"/>
    <property type="evidence" value="ECO:0007669"/>
    <property type="project" value="UniProtKB-UniRule"/>
</dbReference>
<dbReference type="GO" id="GO:0004526">
    <property type="term" value="F:ribonuclease P activity"/>
    <property type="evidence" value="ECO:0007669"/>
    <property type="project" value="UniProtKB-UniRule"/>
</dbReference>
<dbReference type="GO" id="GO:0001682">
    <property type="term" value="P:tRNA 5'-leader removal"/>
    <property type="evidence" value="ECO:0007669"/>
    <property type="project" value="UniProtKB-UniRule"/>
</dbReference>
<dbReference type="Gene3D" id="3.30.70.3250">
    <property type="entry name" value="Ribonuclease P, Pop5 subunit"/>
    <property type="match status" value="1"/>
</dbReference>
<dbReference type="HAMAP" id="MF_00755">
    <property type="entry name" value="RNase_P_2"/>
    <property type="match status" value="1"/>
</dbReference>
<dbReference type="InterPro" id="IPR002759">
    <property type="entry name" value="Pop5/Rpp14/Rnp2-like"/>
</dbReference>
<dbReference type="InterPro" id="IPR038085">
    <property type="entry name" value="Rnp2-like_sf"/>
</dbReference>
<dbReference type="InterPro" id="IPR016434">
    <property type="entry name" value="Rnp2_archaea"/>
</dbReference>
<dbReference type="PANTHER" id="PTHR15441">
    <property type="entry name" value="RIBONUCLEASE P PROTEIN SUBUNIT P14"/>
    <property type="match status" value="1"/>
</dbReference>
<dbReference type="PANTHER" id="PTHR15441:SF2">
    <property type="entry name" value="RIBONUCLEASE P_MRP PROTEIN SUBUNIT POP5"/>
    <property type="match status" value="1"/>
</dbReference>
<dbReference type="Pfam" id="PF01900">
    <property type="entry name" value="RNase_P_Rpp14"/>
    <property type="match status" value="1"/>
</dbReference>
<dbReference type="PIRSF" id="PIRSF004952">
    <property type="entry name" value="RNase_P_2"/>
    <property type="match status" value="1"/>
</dbReference>
<dbReference type="SUPFAM" id="SSF160350">
    <property type="entry name" value="Rnp2-like"/>
    <property type="match status" value="1"/>
</dbReference>
<protein>
    <recommendedName>
        <fullName evidence="1">Ribonuclease P protein component 2</fullName>
        <shortName evidence="1">RNase P component 2</shortName>
        <ecNumber evidence="1">3.1.26.5</ecNumber>
    </recommendedName>
    <alternativeName>
        <fullName evidence="1">Pop5</fullName>
    </alternativeName>
</protein>
<proteinExistence type="inferred from homology"/>
<evidence type="ECO:0000255" key="1">
    <source>
        <dbReference type="HAMAP-Rule" id="MF_00755"/>
    </source>
</evidence>
<evidence type="ECO:0000305" key="2"/>